<comment type="function">
    <text evidence="1">May play a role in DNA repair. It seems to be involved in an RecBC-independent recombinational process of DNA repair. It may act with RecF and RecO.</text>
</comment>
<comment type="similarity">
    <text evidence="1">Belongs to the RecR family.</text>
</comment>
<gene>
    <name evidence="1" type="primary">recR</name>
    <name type="ordered locus">BDI_1434</name>
</gene>
<proteinExistence type="inferred from homology"/>
<evidence type="ECO:0000255" key="1">
    <source>
        <dbReference type="HAMAP-Rule" id="MF_00017"/>
    </source>
</evidence>
<organism>
    <name type="scientific">Parabacteroides distasonis (strain ATCC 8503 / DSM 20701 / CIP 104284 / JCM 5825 / NCTC 11152)</name>
    <dbReference type="NCBI Taxonomy" id="435591"/>
    <lineage>
        <taxon>Bacteria</taxon>
        <taxon>Pseudomonadati</taxon>
        <taxon>Bacteroidota</taxon>
        <taxon>Bacteroidia</taxon>
        <taxon>Bacteroidales</taxon>
        <taxon>Tannerellaceae</taxon>
        <taxon>Parabacteroides</taxon>
    </lineage>
</organism>
<protein>
    <recommendedName>
        <fullName evidence="1">Recombination protein RecR</fullName>
    </recommendedName>
</protein>
<keyword id="KW-0227">DNA damage</keyword>
<keyword id="KW-0233">DNA recombination</keyword>
<keyword id="KW-0234">DNA repair</keyword>
<keyword id="KW-0479">Metal-binding</keyword>
<keyword id="KW-1185">Reference proteome</keyword>
<keyword id="KW-0862">Zinc</keyword>
<keyword id="KW-0863">Zinc-finger</keyword>
<accession>A6LBX7</accession>
<name>RECR_PARD8</name>
<sequence length="208" mass="22965">MNQRYPSALLENAVNELASLPGVGRKTALRLALYMLRRDVGYTENFAAALVALRRDVKYCKVCHNICDDEVCSICANPSRDHSLVCVVENIKEVMAIENTGQFRGVYHVLGGIISPMDGIGPGDLRIDSLVRRVAEGEVKEIILALSTTMEGDTTNFFIYRKLSGYDVRISVIARGVSIGDEIEYADEITLGRSIINRTEFNLTSSNS</sequence>
<feature type="chain" id="PRO_1000001571" description="Recombination protein RecR">
    <location>
        <begin position="1"/>
        <end position="208"/>
    </location>
</feature>
<feature type="domain" description="Toprim" evidence="1">
    <location>
        <begin position="83"/>
        <end position="178"/>
    </location>
</feature>
<feature type="zinc finger region" description="C4-type" evidence="1">
    <location>
        <begin position="60"/>
        <end position="75"/>
    </location>
</feature>
<dbReference type="EMBL" id="CP000140">
    <property type="protein sequence ID" value="ABR43191.1"/>
    <property type="molecule type" value="Genomic_DNA"/>
</dbReference>
<dbReference type="RefSeq" id="WP_005868175.1">
    <property type="nucleotide sequence ID" value="NC_009615.1"/>
</dbReference>
<dbReference type="SMR" id="A6LBX7"/>
<dbReference type="STRING" id="435591.BDI_1434"/>
<dbReference type="PaxDb" id="435591-BDI_1434"/>
<dbReference type="GeneID" id="93525269"/>
<dbReference type="KEGG" id="pdi:BDI_1434"/>
<dbReference type="eggNOG" id="COG0353">
    <property type="taxonomic scope" value="Bacteria"/>
</dbReference>
<dbReference type="HOGENOM" id="CLU_060739_1_1_10"/>
<dbReference type="BioCyc" id="PDIS435591:G1G5A-1475-MONOMER"/>
<dbReference type="Proteomes" id="UP000000566">
    <property type="component" value="Chromosome"/>
</dbReference>
<dbReference type="GO" id="GO:0003677">
    <property type="term" value="F:DNA binding"/>
    <property type="evidence" value="ECO:0007669"/>
    <property type="project" value="UniProtKB-UniRule"/>
</dbReference>
<dbReference type="GO" id="GO:0008270">
    <property type="term" value="F:zinc ion binding"/>
    <property type="evidence" value="ECO:0007669"/>
    <property type="project" value="UniProtKB-KW"/>
</dbReference>
<dbReference type="GO" id="GO:0006310">
    <property type="term" value="P:DNA recombination"/>
    <property type="evidence" value="ECO:0007669"/>
    <property type="project" value="UniProtKB-UniRule"/>
</dbReference>
<dbReference type="GO" id="GO:0006281">
    <property type="term" value="P:DNA repair"/>
    <property type="evidence" value="ECO:0007669"/>
    <property type="project" value="UniProtKB-UniRule"/>
</dbReference>
<dbReference type="CDD" id="cd01025">
    <property type="entry name" value="TOPRIM_recR"/>
    <property type="match status" value="1"/>
</dbReference>
<dbReference type="Gene3D" id="3.30.60.80">
    <property type="match status" value="1"/>
</dbReference>
<dbReference type="Gene3D" id="3.40.1360.10">
    <property type="match status" value="1"/>
</dbReference>
<dbReference type="Gene3D" id="6.10.250.240">
    <property type="match status" value="1"/>
</dbReference>
<dbReference type="Gene3D" id="1.10.8.420">
    <property type="entry name" value="RecR Domain 1"/>
    <property type="match status" value="1"/>
</dbReference>
<dbReference type="HAMAP" id="MF_00017">
    <property type="entry name" value="RecR"/>
    <property type="match status" value="1"/>
</dbReference>
<dbReference type="InterPro" id="IPR000093">
    <property type="entry name" value="DNA_Rcmb_RecR"/>
</dbReference>
<dbReference type="InterPro" id="IPR023627">
    <property type="entry name" value="Rcmb_RecR"/>
</dbReference>
<dbReference type="InterPro" id="IPR015967">
    <property type="entry name" value="Rcmb_RecR_Znf"/>
</dbReference>
<dbReference type="InterPro" id="IPR006171">
    <property type="entry name" value="TOPRIM_dom"/>
</dbReference>
<dbReference type="InterPro" id="IPR034137">
    <property type="entry name" value="TOPRIM_RecR"/>
</dbReference>
<dbReference type="NCBIfam" id="TIGR00615">
    <property type="entry name" value="recR"/>
    <property type="match status" value="1"/>
</dbReference>
<dbReference type="PANTHER" id="PTHR30446">
    <property type="entry name" value="RECOMBINATION PROTEIN RECR"/>
    <property type="match status" value="1"/>
</dbReference>
<dbReference type="PANTHER" id="PTHR30446:SF0">
    <property type="entry name" value="RECOMBINATION PROTEIN RECR"/>
    <property type="match status" value="1"/>
</dbReference>
<dbReference type="Pfam" id="PF21175">
    <property type="entry name" value="RecR_C"/>
    <property type="match status" value="1"/>
</dbReference>
<dbReference type="Pfam" id="PF21176">
    <property type="entry name" value="RecR_HhH"/>
    <property type="match status" value="1"/>
</dbReference>
<dbReference type="Pfam" id="PF02132">
    <property type="entry name" value="RecR_ZnF"/>
    <property type="match status" value="1"/>
</dbReference>
<dbReference type="Pfam" id="PF13662">
    <property type="entry name" value="Toprim_4"/>
    <property type="match status" value="1"/>
</dbReference>
<dbReference type="SMART" id="SM00493">
    <property type="entry name" value="TOPRIM"/>
    <property type="match status" value="1"/>
</dbReference>
<dbReference type="SUPFAM" id="SSF111304">
    <property type="entry name" value="Recombination protein RecR"/>
    <property type="match status" value="1"/>
</dbReference>
<dbReference type="PROSITE" id="PS01300">
    <property type="entry name" value="RECR"/>
    <property type="match status" value="1"/>
</dbReference>
<dbReference type="PROSITE" id="PS50880">
    <property type="entry name" value="TOPRIM"/>
    <property type="match status" value="1"/>
</dbReference>
<reference key="1">
    <citation type="journal article" date="2007" name="PLoS Biol.">
        <title>Evolution of symbiotic bacteria in the distal human intestine.</title>
        <authorList>
            <person name="Xu J."/>
            <person name="Mahowald M.A."/>
            <person name="Ley R.E."/>
            <person name="Lozupone C.A."/>
            <person name="Hamady M."/>
            <person name="Martens E.C."/>
            <person name="Henrissat B."/>
            <person name="Coutinho P.M."/>
            <person name="Minx P."/>
            <person name="Latreille P."/>
            <person name="Cordum H."/>
            <person name="Van Brunt A."/>
            <person name="Kim K."/>
            <person name="Fulton R.S."/>
            <person name="Fulton L.A."/>
            <person name="Clifton S.W."/>
            <person name="Wilson R.K."/>
            <person name="Knight R.D."/>
            <person name="Gordon J.I."/>
        </authorList>
    </citation>
    <scope>NUCLEOTIDE SEQUENCE [LARGE SCALE GENOMIC DNA]</scope>
    <source>
        <strain>ATCC 8503 / DSM 20701 / CIP 104284 / JCM 5825 / NCTC 11152</strain>
    </source>
</reference>